<protein>
    <recommendedName>
        <fullName evidence="1">tRNA-modifying protein YgfZ</fullName>
    </recommendedName>
</protein>
<dbReference type="EMBL" id="CP001164">
    <property type="protein sequence ID" value="ACI39481.1"/>
    <property type="molecule type" value="Genomic_DNA"/>
</dbReference>
<dbReference type="RefSeq" id="WP_000886053.1">
    <property type="nucleotide sequence ID" value="NC_011353.1"/>
</dbReference>
<dbReference type="SMR" id="B5YQ91"/>
<dbReference type="KEGG" id="ecf:ECH74115_4190"/>
<dbReference type="HOGENOM" id="CLU_007884_6_1_6"/>
<dbReference type="GO" id="GO:0005737">
    <property type="term" value="C:cytoplasm"/>
    <property type="evidence" value="ECO:0007669"/>
    <property type="project" value="UniProtKB-SubCell"/>
</dbReference>
<dbReference type="GO" id="GO:0005542">
    <property type="term" value="F:folic acid binding"/>
    <property type="evidence" value="ECO:0007669"/>
    <property type="project" value="UniProtKB-UniRule"/>
</dbReference>
<dbReference type="GO" id="GO:0016226">
    <property type="term" value="P:iron-sulfur cluster assembly"/>
    <property type="evidence" value="ECO:0007669"/>
    <property type="project" value="TreeGrafter"/>
</dbReference>
<dbReference type="GO" id="GO:0009451">
    <property type="term" value="P:RNA modification"/>
    <property type="evidence" value="ECO:0007669"/>
    <property type="project" value="InterPro"/>
</dbReference>
<dbReference type="GO" id="GO:0008033">
    <property type="term" value="P:tRNA processing"/>
    <property type="evidence" value="ECO:0007669"/>
    <property type="project" value="UniProtKB-UniRule"/>
</dbReference>
<dbReference type="FunFam" id="2.40.30.160:FF:000001">
    <property type="entry name" value="tRNA-modifying protein YgfZ"/>
    <property type="match status" value="1"/>
</dbReference>
<dbReference type="FunFam" id="3.30.70.1400:FF:000002">
    <property type="entry name" value="tRNA-modifying protein YgfZ"/>
    <property type="match status" value="1"/>
</dbReference>
<dbReference type="FunFam" id="3.30.70.1630:FF:000001">
    <property type="entry name" value="tRNA-modifying protein YgfZ"/>
    <property type="match status" value="1"/>
</dbReference>
<dbReference type="Gene3D" id="2.40.30.160">
    <property type="match status" value="1"/>
</dbReference>
<dbReference type="Gene3D" id="3.30.70.1630">
    <property type="match status" value="1"/>
</dbReference>
<dbReference type="Gene3D" id="3.30.70.1400">
    <property type="entry name" value="Aminomethyltransferase beta-barrel domains"/>
    <property type="match status" value="1"/>
</dbReference>
<dbReference type="HAMAP" id="MF_01175">
    <property type="entry name" value="tRNA_modifying_YgfZ"/>
    <property type="match status" value="1"/>
</dbReference>
<dbReference type="InterPro" id="IPR006222">
    <property type="entry name" value="GCV_T_N"/>
</dbReference>
<dbReference type="InterPro" id="IPR029043">
    <property type="entry name" value="GcvT/YgfZ_C"/>
</dbReference>
<dbReference type="InterPro" id="IPR023758">
    <property type="entry name" value="tRNA-modifying_YgfZ"/>
</dbReference>
<dbReference type="InterPro" id="IPR045179">
    <property type="entry name" value="YgfZ/GcvT"/>
</dbReference>
<dbReference type="InterPro" id="IPR017703">
    <property type="entry name" value="YgfZ/GcvT_CS"/>
</dbReference>
<dbReference type="InterPro" id="IPR048451">
    <property type="entry name" value="YgfZ_barrel"/>
</dbReference>
<dbReference type="NCBIfam" id="NF007110">
    <property type="entry name" value="PRK09559.1"/>
    <property type="match status" value="1"/>
</dbReference>
<dbReference type="NCBIfam" id="TIGR03317">
    <property type="entry name" value="ygfZ_signature"/>
    <property type="match status" value="1"/>
</dbReference>
<dbReference type="PANTHER" id="PTHR22602">
    <property type="entry name" value="TRANSFERASE CAF17, MITOCHONDRIAL-RELATED"/>
    <property type="match status" value="1"/>
</dbReference>
<dbReference type="PANTHER" id="PTHR22602:SF0">
    <property type="entry name" value="TRANSFERASE CAF17, MITOCHONDRIAL-RELATED"/>
    <property type="match status" value="1"/>
</dbReference>
<dbReference type="Pfam" id="PF01571">
    <property type="entry name" value="GCV_T"/>
    <property type="match status" value="1"/>
</dbReference>
<dbReference type="Pfam" id="PF21130">
    <property type="entry name" value="YgfZ_barrel"/>
    <property type="match status" value="1"/>
</dbReference>
<dbReference type="SUPFAM" id="SSF101790">
    <property type="entry name" value="Aminomethyltransferase beta-barrel domain"/>
    <property type="match status" value="1"/>
</dbReference>
<dbReference type="SUPFAM" id="SSF103025">
    <property type="entry name" value="Folate-binding domain"/>
    <property type="match status" value="1"/>
</dbReference>
<comment type="function">
    <text evidence="1">Folate-binding protein involved in regulating the level of ATP-DnaA and in the modification of some tRNAs. It is probably a key factor in regulatory networks that act via tRNA modification, such as initiation of chromosomal replication.</text>
</comment>
<comment type="subcellular location">
    <subcellularLocation>
        <location evidence="1">Cytoplasm</location>
    </subcellularLocation>
</comment>
<comment type="similarity">
    <text evidence="1">Belongs to the tRNA-modifying YgfZ family.</text>
</comment>
<keyword id="KW-0963">Cytoplasm</keyword>
<keyword id="KW-0290">Folate-binding</keyword>
<keyword id="KW-0819">tRNA processing</keyword>
<evidence type="ECO:0000255" key="1">
    <source>
        <dbReference type="HAMAP-Rule" id="MF_01175"/>
    </source>
</evidence>
<sequence length="326" mass="36058">MAFTPFPPRQPTASARLPLTLMTLDDWALATITGADSEKYLQGQVTADVSQMTDDQHLLAAHCDAKGKMWSNLRLFRDGDGFAWIERRSVREPQLAELKKYAVFSKVTIAPDDERVLLGVAGFQARAALANIFSELPSKEKQVVKEGATTLLWFEHPAERFLIVTDEATANMLTDKLRGEAELNNSQQWLALNIEAGFPVIDAANSGQFIPQATNLQALGGISFKKGCYTGQEMVARAKFRGANKRALWLLTGSASRLPEAGEDLELKMGENWRRTGTVLAAVKLEDGQVVVQVVMNNDMEPDSIFRVRDDANTLCIEPLPYSLEE</sequence>
<gene>
    <name evidence="1" type="primary">ygfZ</name>
    <name type="ordered locus">ECH74115_4190</name>
</gene>
<reference key="1">
    <citation type="journal article" date="2011" name="Proc. Natl. Acad. Sci. U.S.A.">
        <title>Genomic anatomy of Escherichia coli O157:H7 outbreaks.</title>
        <authorList>
            <person name="Eppinger M."/>
            <person name="Mammel M.K."/>
            <person name="Leclerc J.E."/>
            <person name="Ravel J."/>
            <person name="Cebula T.A."/>
        </authorList>
    </citation>
    <scope>NUCLEOTIDE SEQUENCE [LARGE SCALE GENOMIC DNA]</scope>
    <source>
        <strain>EC4115 / EHEC</strain>
    </source>
</reference>
<accession>B5YQ91</accession>
<name>YGFZ_ECO5E</name>
<feature type="chain" id="PRO_1000138070" description="tRNA-modifying protein YgfZ">
    <location>
        <begin position="1"/>
        <end position="326"/>
    </location>
</feature>
<feature type="binding site" evidence="1">
    <location>
        <position position="27"/>
    </location>
    <ligand>
        <name>folate</name>
        <dbReference type="ChEBI" id="CHEBI:62501"/>
    </ligand>
</feature>
<feature type="binding site" evidence="1">
    <location>
        <position position="189"/>
    </location>
    <ligand>
        <name>folate</name>
        <dbReference type="ChEBI" id="CHEBI:62501"/>
    </ligand>
</feature>
<organism>
    <name type="scientific">Escherichia coli O157:H7 (strain EC4115 / EHEC)</name>
    <dbReference type="NCBI Taxonomy" id="444450"/>
    <lineage>
        <taxon>Bacteria</taxon>
        <taxon>Pseudomonadati</taxon>
        <taxon>Pseudomonadota</taxon>
        <taxon>Gammaproteobacteria</taxon>
        <taxon>Enterobacterales</taxon>
        <taxon>Enterobacteriaceae</taxon>
        <taxon>Escherichia</taxon>
    </lineage>
</organism>
<proteinExistence type="inferred from homology"/>